<keyword id="KW-0028">Amino-acid biosynthesis</keyword>
<keyword id="KW-0413">Isomerase</keyword>
<keyword id="KW-0486">Methionine biosynthesis</keyword>
<sequence length="351" mass="38655">MITVVTIPRSVSWKGDAIAVLNQTKLPHSTEYKTLTTIEEVWKSIVMLEVRGAPAIGIVAAFGLALASKKYTTLHIEEFQKKFNRDCNYLGTSRPTAVNLFWAIDRMRESIQEITTIKEAQKILEEEALRIQQEDEAVCRSIGEHALTCFKDGDNILTICNAGSIATARYGTALAPFYIGKEKGVHLHAYACETRPVLQGGRLTTWELKQAGIDVTLITDNTAAHAIQTKEINAIIVGADRIVANGDTANKIGTMNLAILAKYFDIPFYVAAPLSTFDITKQTGAEIVIEERDETEVTKIFGKQVAPVGTTVYNPAFDVTPNELITGIITEQGIIRGDYKREIASLFEKTS</sequence>
<reference key="1">
    <citation type="journal article" date="2006" name="J. Bacteriol.">
        <title>Pathogenomic sequence analysis of Bacillus cereus and Bacillus thuringiensis isolates closely related to Bacillus anthracis.</title>
        <authorList>
            <person name="Han C.S."/>
            <person name="Xie G."/>
            <person name="Challacombe J.F."/>
            <person name="Altherr M.R."/>
            <person name="Bhotika S.S."/>
            <person name="Bruce D."/>
            <person name="Campbell C.S."/>
            <person name="Campbell M.L."/>
            <person name="Chen J."/>
            <person name="Chertkov O."/>
            <person name="Cleland C."/>
            <person name="Dimitrijevic M."/>
            <person name="Doggett N.A."/>
            <person name="Fawcett J.J."/>
            <person name="Glavina T."/>
            <person name="Goodwin L.A."/>
            <person name="Hill K.K."/>
            <person name="Hitchcock P."/>
            <person name="Jackson P.J."/>
            <person name="Keim P."/>
            <person name="Kewalramani A.R."/>
            <person name="Longmire J."/>
            <person name="Lucas S."/>
            <person name="Malfatti S."/>
            <person name="McMurry K."/>
            <person name="Meincke L.J."/>
            <person name="Misra M."/>
            <person name="Moseman B.L."/>
            <person name="Mundt M."/>
            <person name="Munk A.C."/>
            <person name="Okinaka R.T."/>
            <person name="Parson-Quintana B."/>
            <person name="Reilly L.P."/>
            <person name="Richardson P."/>
            <person name="Robinson D.L."/>
            <person name="Rubin E."/>
            <person name="Saunders E."/>
            <person name="Tapia R."/>
            <person name="Tesmer J.G."/>
            <person name="Thayer N."/>
            <person name="Thompson L.S."/>
            <person name="Tice H."/>
            <person name="Ticknor L.O."/>
            <person name="Wills P.L."/>
            <person name="Brettin T.S."/>
            <person name="Gilna P."/>
        </authorList>
    </citation>
    <scope>NUCLEOTIDE SEQUENCE [LARGE SCALE GENOMIC DNA]</scope>
    <source>
        <strain>ZK / E33L</strain>
    </source>
</reference>
<comment type="function">
    <text evidence="1">Catalyzes the interconversion of methylthioribose-1-phosphate (MTR-1-P) into methylthioribulose-1-phosphate (MTRu-1-P).</text>
</comment>
<comment type="catalytic activity">
    <reaction evidence="1">
        <text>5-(methylsulfanyl)-alpha-D-ribose 1-phosphate = 5-(methylsulfanyl)-D-ribulose 1-phosphate</text>
        <dbReference type="Rhea" id="RHEA:19989"/>
        <dbReference type="ChEBI" id="CHEBI:58533"/>
        <dbReference type="ChEBI" id="CHEBI:58548"/>
        <dbReference type="EC" id="5.3.1.23"/>
    </reaction>
</comment>
<comment type="pathway">
    <text evidence="1">Amino-acid biosynthesis; L-methionine biosynthesis via salvage pathway; L-methionine from S-methyl-5-thio-alpha-D-ribose 1-phosphate: step 1/6.</text>
</comment>
<comment type="subunit">
    <text evidence="1">Homodimer.</text>
</comment>
<comment type="similarity">
    <text evidence="1">Belongs to the EIF-2B alpha/beta/delta subunits family. MtnA subfamily.</text>
</comment>
<organism>
    <name type="scientific">Bacillus cereus (strain ZK / E33L)</name>
    <dbReference type="NCBI Taxonomy" id="288681"/>
    <lineage>
        <taxon>Bacteria</taxon>
        <taxon>Bacillati</taxon>
        <taxon>Bacillota</taxon>
        <taxon>Bacilli</taxon>
        <taxon>Bacillales</taxon>
        <taxon>Bacillaceae</taxon>
        <taxon>Bacillus</taxon>
        <taxon>Bacillus cereus group</taxon>
    </lineage>
</organism>
<proteinExistence type="inferred from homology"/>
<name>MTNA_BACCZ</name>
<evidence type="ECO:0000255" key="1">
    <source>
        <dbReference type="HAMAP-Rule" id="MF_01678"/>
    </source>
</evidence>
<feature type="chain" id="PRO_0000357147" description="Methylthioribose-1-phosphate isomerase">
    <location>
        <begin position="1"/>
        <end position="351"/>
    </location>
</feature>
<feature type="active site" description="Proton donor" evidence="1">
    <location>
        <position position="240"/>
    </location>
</feature>
<feature type="binding site" evidence="1">
    <location>
        <begin position="51"/>
        <end position="53"/>
    </location>
    <ligand>
        <name>substrate</name>
    </ligand>
</feature>
<feature type="binding site" evidence="1">
    <location>
        <position position="94"/>
    </location>
    <ligand>
        <name>substrate</name>
    </ligand>
</feature>
<feature type="binding site" evidence="1">
    <location>
        <position position="199"/>
    </location>
    <ligand>
        <name>substrate</name>
    </ligand>
</feature>
<feature type="binding site" evidence="1">
    <location>
        <begin position="250"/>
        <end position="251"/>
    </location>
    <ligand>
        <name>substrate</name>
    </ligand>
</feature>
<feature type="site" description="Transition state stabilizer" evidence="1">
    <location>
        <position position="160"/>
    </location>
</feature>
<protein>
    <recommendedName>
        <fullName evidence="1">Methylthioribose-1-phosphate isomerase</fullName>
        <shortName evidence="1">M1Pi</shortName>
        <shortName evidence="1">MTR-1-P isomerase</shortName>
        <ecNumber evidence="1">5.3.1.23</ecNumber>
    </recommendedName>
    <alternativeName>
        <fullName evidence="1">S-methyl-5-thioribose-1-phosphate isomerase</fullName>
    </alternativeName>
</protein>
<dbReference type="EC" id="5.3.1.23" evidence="1"/>
<dbReference type="EMBL" id="CP000001">
    <property type="protein sequence ID" value="AAU16479.1"/>
    <property type="molecule type" value="Genomic_DNA"/>
</dbReference>
<dbReference type="RefSeq" id="WP_000634052.1">
    <property type="nucleotide sequence ID" value="NC_006274.1"/>
</dbReference>
<dbReference type="SMR" id="Q635P7"/>
<dbReference type="KEGG" id="bcz:BCE33L3789"/>
<dbReference type="PATRIC" id="fig|288681.22.peg.1614"/>
<dbReference type="UniPathway" id="UPA00904">
    <property type="reaction ID" value="UER00874"/>
</dbReference>
<dbReference type="Proteomes" id="UP000002612">
    <property type="component" value="Chromosome"/>
</dbReference>
<dbReference type="GO" id="GO:0046523">
    <property type="term" value="F:S-methyl-5-thioribose-1-phosphate isomerase activity"/>
    <property type="evidence" value="ECO:0007669"/>
    <property type="project" value="UniProtKB-UniRule"/>
</dbReference>
<dbReference type="GO" id="GO:0019509">
    <property type="term" value="P:L-methionine salvage from methylthioadenosine"/>
    <property type="evidence" value="ECO:0007669"/>
    <property type="project" value="UniProtKB-UniRule"/>
</dbReference>
<dbReference type="FunFam" id="1.20.120.420:FF:000005">
    <property type="entry name" value="Methylthioribose-1-phosphate isomerase"/>
    <property type="match status" value="1"/>
</dbReference>
<dbReference type="FunFam" id="3.40.50.10470:FF:000006">
    <property type="entry name" value="Methylthioribose-1-phosphate isomerase"/>
    <property type="match status" value="1"/>
</dbReference>
<dbReference type="Gene3D" id="1.20.120.420">
    <property type="entry name" value="translation initiation factor eif-2b, domain 1"/>
    <property type="match status" value="1"/>
</dbReference>
<dbReference type="Gene3D" id="3.40.50.10470">
    <property type="entry name" value="Translation initiation factor eif-2b, domain 2"/>
    <property type="match status" value="1"/>
</dbReference>
<dbReference type="HAMAP" id="MF_01678">
    <property type="entry name" value="Salvage_MtnA"/>
    <property type="match status" value="1"/>
</dbReference>
<dbReference type="InterPro" id="IPR000649">
    <property type="entry name" value="IF-2B-related"/>
</dbReference>
<dbReference type="InterPro" id="IPR005251">
    <property type="entry name" value="IF-M1Pi"/>
</dbReference>
<dbReference type="InterPro" id="IPR042529">
    <property type="entry name" value="IF_2B-like_C"/>
</dbReference>
<dbReference type="InterPro" id="IPR011559">
    <property type="entry name" value="Initiation_fac_2B_a/b/d"/>
</dbReference>
<dbReference type="InterPro" id="IPR027363">
    <property type="entry name" value="M1Pi_N"/>
</dbReference>
<dbReference type="InterPro" id="IPR037171">
    <property type="entry name" value="NagB/RpiA_transferase-like"/>
</dbReference>
<dbReference type="NCBIfam" id="TIGR00524">
    <property type="entry name" value="eIF-2B_rel"/>
    <property type="match status" value="1"/>
</dbReference>
<dbReference type="NCBIfam" id="NF004326">
    <property type="entry name" value="PRK05720.1"/>
    <property type="match status" value="1"/>
</dbReference>
<dbReference type="NCBIfam" id="TIGR00512">
    <property type="entry name" value="salvage_mtnA"/>
    <property type="match status" value="1"/>
</dbReference>
<dbReference type="PANTHER" id="PTHR43475">
    <property type="entry name" value="METHYLTHIORIBOSE-1-PHOSPHATE ISOMERASE"/>
    <property type="match status" value="1"/>
</dbReference>
<dbReference type="PANTHER" id="PTHR43475:SF4">
    <property type="entry name" value="METHYLTHIORIBOSE-1-PHOSPHATE ISOMERASE"/>
    <property type="match status" value="1"/>
</dbReference>
<dbReference type="Pfam" id="PF01008">
    <property type="entry name" value="IF-2B"/>
    <property type="match status" value="1"/>
</dbReference>
<dbReference type="SUPFAM" id="SSF100950">
    <property type="entry name" value="NagB/RpiA/CoA transferase-like"/>
    <property type="match status" value="1"/>
</dbReference>
<accession>Q635P7</accession>
<gene>
    <name evidence="1" type="primary">mtnA</name>
    <name type="ordered locus">BCE33L3789</name>
</gene>